<proteinExistence type="evidence at transcript level"/>
<evidence type="ECO:0000250" key="1">
    <source>
        <dbReference type="UniProtKB" id="Q13526"/>
    </source>
</evidence>
<evidence type="ECO:0000250" key="2">
    <source>
        <dbReference type="UniProtKB" id="Q9QUR7"/>
    </source>
</evidence>
<evidence type="ECO:0000255" key="3">
    <source>
        <dbReference type="PROSITE-ProRule" id="PRU00224"/>
    </source>
</evidence>
<evidence type="ECO:0000255" key="4">
    <source>
        <dbReference type="PROSITE-ProRule" id="PRU00278"/>
    </source>
</evidence>
<evidence type="ECO:0000256" key="5">
    <source>
        <dbReference type="SAM" id="MobiDB-lite"/>
    </source>
</evidence>
<accession>Q5BIN5</accession>
<reference key="1">
    <citation type="journal article" date="2005" name="BMC Genomics">
        <title>Characterization of 954 bovine full-CDS cDNA sequences.</title>
        <authorList>
            <person name="Harhay G.P."/>
            <person name="Sonstegard T.S."/>
            <person name="Keele J.W."/>
            <person name="Heaton M.P."/>
            <person name="Clawson M.L."/>
            <person name="Snelling W.M."/>
            <person name="Wiedmann R.T."/>
            <person name="Van Tassell C.P."/>
            <person name="Smith T.P.L."/>
        </authorList>
    </citation>
    <scope>NUCLEOTIDE SEQUENCE [LARGE SCALE MRNA]</scope>
</reference>
<reference key="2">
    <citation type="submission" date="2006-01" db="EMBL/GenBank/DDBJ databases">
        <authorList>
            <consortium name="NIH - Mammalian Gene Collection (MGC) project"/>
        </authorList>
    </citation>
    <scope>NUCLEOTIDE SEQUENCE [LARGE SCALE MRNA]</scope>
    <source>
        <strain>Hereford</strain>
        <tissue>Testis</tissue>
    </source>
</reference>
<keyword id="KW-0007">Acetylation</keyword>
<keyword id="KW-0131">Cell cycle</keyword>
<keyword id="KW-0963">Cytoplasm</keyword>
<keyword id="KW-0413">Isomerase</keyword>
<keyword id="KW-0539">Nucleus</keyword>
<keyword id="KW-0597">Phosphoprotein</keyword>
<keyword id="KW-1185">Reference proteome</keyword>
<keyword id="KW-0697">Rotamase</keyword>
<gene>
    <name type="primary">PIN1</name>
</gene>
<protein>
    <recommendedName>
        <fullName>Peptidyl-prolyl cis-trans isomerase NIMA-interacting 1</fullName>
        <ecNumber evidence="1">5.2.1.8</ecNumber>
    </recommendedName>
    <alternativeName>
        <fullName>Peptidyl-prolyl cis-trans isomerase Pin1</fullName>
        <shortName>PPIase Pin1</shortName>
    </alternativeName>
    <alternativeName>
        <fullName>Rotamase Pin1</fullName>
    </alternativeName>
</protein>
<sequence length="163" mass="18273">MADEEKLPPGWEKRMSRSSGRVYYFNHITNASQWERPSGNSSGSGKNGQGEPTRVRCSHLLVKHSQSRRPSSWRQEKITRTKEEALELINGYIQKIKSGEEDFESLASQFSDCSSAKARGDLGAFSRGQMQKPFEDASFALRTGEMSGPVFTDSGIHIILRTE</sequence>
<comment type="function">
    <text evidence="1">Peptidyl-prolyl cis/trans isomerase (PPIase) that binds to and isomerizes specific phosphorylated Ser/Thr-Pro (pSer/Thr-Pro) motifs. By inducing conformational changes in a subset of phosphorylated proteins, acts as a molecular switch in multiple cellular processes. Displays a preference for acidic residues located N-terminally to the proline bond to be isomerized. Regulates mitosis presumably by interacting with NIMA and attenuating its mitosis-promoting activity. Down-regulates kinase activity of BTK. Can transactivate multiple oncogenes and induce centrosome amplification, chromosome instability and cell transformation. Required for the efficient dephosphorylation and recycling of RAF1 after mitogen activation. Binds and targets PML and BCL6 for degradation in a phosphorylation-dependent manner. Acts as a regulator of JNK cascade by binding to phosphorylated FBXW7, disrupting FBXW7 dimerization and promoting FBXW7 autoubiquitination and degradation: degradation of FBXW7 leads to subsequent stabilization of JUN. May facilitate the ubiquitination and proteasomal degradation of RBBP8/CtIP through CUL3/KLHL15 E3 ubiquitin-protein ligase complex, hence favors DNA double-strand repair through error-prone non-homologous end joining (NHEJ) over error-free, RBBP8-mediated homologous recombination (HR). Upon IL33-induced lung inflammation, catalyzes cis-trans isomerization of phosphorylated IRAK3/IRAK-M, inducing IRAK3 stabilization, nuclear translocation and expression of pro-inflammatory genes in dendritic cells. Catalyzes cis-trans isomerization of phosphorylated phosphoglycerate kinase PGK1 under hypoxic conditions to promote its binding to the TOM complex and targeting to the mitochondrion (By similarity).</text>
</comment>
<comment type="catalytic activity">
    <reaction evidence="1">
        <text>[protein]-peptidylproline (omega=180) = [protein]-peptidylproline (omega=0)</text>
        <dbReference type="Rhea" id="RHEA:16237"/>
        <dbReference type="Rhea" id="RHEA-COMP:10747"/>
        <dbReference type="Rhea" id="RHEA-COMP:10748"/>
        <dbReference type="ChEBI" id="CHEBI:83833"/>
        <dbReference type="ChEBI" id="CHEBI:83834"/>
        <dbReference type="EC" id="5.2.1.8"/>
    </reaction>
</comment>
<comment type="subunit">
    <text evidence="1 2">Interacts with STIL (By similarity). Interacts with KIF20B. Interacts with NEK6. Interacts (via WW domain) with PRKX. Interacts with BTK. Interacts (via PpiC domain) with DAPK1. Interacts with the phosphorylated form of RAF1. Interacts (via WW domain) with ATCAY; upon NGF stimulation. Interacts with PML (isoform PML-4). Interacts with BCL6. Interacts with FBXW7, disrupting FBXW7 dimerization and promoting FBXW7 autoubiquitination and degradation. Directly interacts with RBBP8/CtIP; this interaction depends upon RBBP8 phosphorylation. Interacts (via WW domain) with IRAK3/IRAK-M in response to IL33-mediated (but not TLR4 ligand LPS) dendritic cell stimulation (By similarity). Interacts with PGK1 (when phosphorylated at 'Ser-203'); the interaction is direct, occurs under hypoxic conditions, and targets PGK1 to the mitochondrion by promoting interactions with the TOM complex (By similarity).</text>
</comment>
<comment type="subcellular location">
    <subcellularLocation>
        <location evidence="1">Nucleus</location>
    </subcellularLocation>
    <subcellularLocation>
        <location evidence="1">Nucleus speckle</location>
    </subcellularLocation>
    <subcellularLocation>
        <location evidence="1">Cytoplasm</location>
    </subcellularLocation>
    <text evidence="1">Colocalizes with NEK6 in the nucleus. Mainly localized in the nucleus but phosphorylation at Ser-71 by DAPK1 results in inhibition of its nuclear localization.</text>
</comment>
<comment type="domain">
    <text evidence="1">The WW domain is required for the interaction with STIL and KIF20B.</text>
</comment>
<comment type="PTM">
    <text evidence="1 2">Phosphorylation at Ser-71 by DAPK1 results in inhibition of its catalytic activity, nuclear localization, and its ability to induce centrosome amplification, chromosome instability and cell transformation (By similarity). Ser-71 is dephosphorylated upon IL33-stimulation of dendritic cells (By similarity).</text>
</comment>
<name>PIN1_BOVIN</name>
<organism>
    <name type="scientific">Bos taurus</name>
    <name type="common">Bovine</name>
    <dbReference type="NCBI Taxonomy" id="9913"/>
    <lineage>
        <taxon>Eukaryota</taxon>
        <taxon>Metazoa</taxon>
        <taxon>Chordata</taxon>
        <taxon>Craniata</taxon>
        <taxon>Vertebrata</taxon>
        <taxon>Euteleostomi</taxon>
        <taxon>Mammalia</taxon>
        <taxon>Eutheria</taxon>
        <taxon>Laurasiatheria</taxon>
        <taxon>Artiodactyla</taxon>
        <taxon>Ruminantia</taxon>
        <taxon>Pecora</taxon>
        <taxon>Bovidae</taxon>
        <taxon>Bovinae</taxon>
        <taxon>Bos</taxon>
    </lineage>
</organism>
<feature type="chain" id="PRO_0000236242" description="Peptidyl-prolyl cis-trans isomerase NIMA-interacting 1">
    <location>
        <begin position="1"/>
        <end position="163"/>
    </location>
</feature>
<feature type="domain" description="WW" evidence="3">
    <location>
        <begin position="5"/>
        <end position="39"/>
    </location>
</feature>
<feature type="domain" description="PpiC" evidence="4">
    <location>
        <begin position="52"/>
        <end position="163"/>
    </location>
</feature>
<feature type="region of interest" description="Disordered" evidence="5">
    <location>
        <begin position="33"/>
        <end position="54"/>
    </location>
</feature>
<feature type="modified residue" description="N6-acetyllysine" evidence="1">
    <location>
        <position position="46"/>
    </location>
</feature>
<feature type="modified residue" description="Phosphoserine; by DAPK1" evidence="1">
    <location>
        <position position="71"/>
    </location>
</feature>
<feature type="modified residue" description="Phosphoserine" evidence="1">
    <location>
        <position position="108"/>
    </location>
</feature>
<dbReference type="EC" id="5.2.1.8" evidence="1"/>
<dbReference type="EMBL" id="BT021189">
    <property type="protein sequence ID" value="AAX31371.1"/>
    <property type="molecule type" value="mRNA"/>
</dbReference>
<dbReference type="EMBL" id="BC112583">
    <property type="protein sequence ID" value="AAI12584.1"/>
    <property type="molecule type" value="mRNA"/>
</dbReference>
<dbReference type="RefSeq" id="NP_001029804.1">
    <property type="nucleotide sequence ID" value="NM_001034632.3"/>
</dbReference>
<dbReference type="BMRB" id="Q5BIN5"/>
<dbReference type="SMR" id="Q5BIN5"/>
<dbReference type="FunCoup" id="Q5BIN5">
    <property type="interactions" value="3310"/>
</dbReference>
<dbReference type="STRING" id="9913.ENSBTAP00000022592"/>
<dbReference type="PaxDb" id="9913-ENSBTAP00000022592"/>
<dbReference type="Ensembl" id="ENSBTAT00000022592.3">
    <property type="protein sequence ID" value="ENSBTAP00000022592.2"/>
    <property type="gene ID" value="ENSBTAG00000016988.4"/>
</dbReference>
<dbReference type="GeneID" id="535470"/>
<dbReference type="KEGG" id="bta:535470"/>
<dbReference type="CTD" id="5300"/>
<dbReference type="VEuPathDB" id="HostDB:ENSBTAG00000016988"/>
<dbReference type="VGNC" id="VGNC:97301">
    <property type="gene designation" value="PIN1"/>
</dbReference>
<dbReference type="eggNOG" id="KOG3259">
    <property type="taxonomic scope" value="Eukaryota"/>
</dbReference>
<dbReference type="GeneTree" id="ENSGT00640000091578"/>
<dbReference type="HOGENOM" id="CLU_090028_0_1_1"/>
<dbReference type="InParanoid" id="Q5BIN5"/>
<dbReference type="OMA" id="DEVQCLH"/>
<dbReference type="OrthoDB" id="2530521at2759"/>
<dbReference type="TreeFam" id="TF101101"/>
<dbReference type="Reactome" id="R-BTA-5668599">
    <property type="pathway name" value="RHO GTPases Activate NADPH Oxidases"/>
</dbReference>
<dbReference type="Reactome" id="R-BTA-6804756">
    <property type="pathway name" value="Regulation of TP53 Activity through Phosphorylation"/>
</dbReference>
<dbReference type="Reactome" id="R-BTA-6811555">
    <property type="pathway name" value="PI5P Regulates TP53 Acetylation"/>
</dbReference>
<dbReference type="Reactome" id="R-BTA-936440">
    <property type="pathway name" value="Negative regulators of DDX58/IFIH1 signaling"/>
</dbReference>
<dbReference type="Proteomes" id="UP000009136">
    <property type="component" value="Chromosome 7"/>
</dbReference>
<dbReference type="Bgee" id="ENSBTAG00000016988">
    <property type="expression patterns" value="Expressed in retina and 108 other cell types or tissues"/>
</dbReference>
<dbReference type="GO" id="GO:0005737">
    <property type="term" value="C:cytoplasm"/>
    <property type="evidence" value="ECO:0000250"/>
    <property type="project" value="UniProtKB"/>
</dbReference>
<dbReference type="GO" id="GO:0005829">
    <property type="term" value="C:cytosol"/>
    <property type="evidence" value="ECO:0000318"/>
    <property type="project" value="GO_Central"/>
</dbReference>
<dbReference type="GO" id="GO:0016607">
    <property type="term" value="C:nuclear speck"/>
    <property type="evidence" value="ECO:0007669"/>
    <property type="project" value="UniProtKB-SubCell"/>
</dbReference>
<dbReference type="GO" id="GO:0005634">
    <property type="term" value="C:nucleus"/>
    <property type="evidence" value="ECO:0000250"/>
    <property type="project" value="UniProtKB"/>
</dbReference>
<dbReference type="GO" id="GO:0016859">
    <property type="term" value="F:cis-trans isomerase activity"/>
    <property type="evidence" value="ECO:0000250"/>
    <property type="project" value="UniProtKB"/>
</dbReference>
<dbReference type="GO" id="GO:0003755">
    <property type="term" value="F:peptidyl-prolyl cis-trans isomerase activity"/>
    <property type="evidence" value="ECO:0000250"/>
    <property type="project" value="UniProtKB"/>
</dbReference>
<dbReference type="GO" id="GO:1902430">
    <property type="term" value="P:negative regulation of amyloid-beta formation"/>
    <property type="evidence" value="ECO:0000250"/>
    <property type="project" value="UniProtKB"/>
</dbReference>
<dbReference type="GO" id="GO:0000413">
    <property type="term" value="P:protein peptidyl-prolyl isomerization"/>
    <property type="evidence" value="ECO:0000250"/>
    <property type="project" value="UniProtKB"/>
</dbReference>
<dbReference type="GO" id="GO:0042127">
    <property type="term" value="P:regulation of cell population proliferation"/>
    <property type="evidence" value="ECO:0000250"/>
    <property type="project" value="AgBase"/>
</dbReference>
<dbReference type="GO" id="GO:0031647">
    <property type="term" value="P:regulation of protein stability"/>
    <property type="evidence" value="ECO:0000250"/>
    <property type="project" value="UniProtKB"/>
</dbReference>
<dbReference type="GO" id="GO:0001666">
    <property type="term" value="P:response to hypoxia"/>
    <property type="evidence" value="ECO:0000250"/>
    <property type="project" value="UniProtKB"/>
</dbReference>
<dbReference type="CDD" id="cd00201">
    <property type="entry name" value="WW"/>
    <property type="match status" value="1"/>
</dbReference>
<dbReference type="FunFam" id="2.20.70.10:FF:000046">
    <property type="entry name" value="Peptidyl-prolyl cis-trans isomerase"/>
    <property type="match status" value="1"/>
</dbReference>
<dbReference type="FunFam" id="3.10.50.40:FF:000010">
    <property type="entry name" value="Peptidyl-prolyl cis-trans isomerase Pin1"/>
    <property type="match status" value="1"/>
</dbReference>
<dbReference type="Gene3D" id="2.20.70.10">
    <property type="match status" value="1"/>
</dbReference>
<dbReference type="Gene3D" id="3.10.50.40">
    <property type="match status" value="1"/>
</dbReference>
<dbReference type="InterPro" id="IPR046357">
    <property type="entry name" value="PPIase_dom_sf"/>
</dbReference>
<dbReference type="InterPro" id="IPR051370">
    <property type="entry name" value="PPIase_Pin1"/>
</dbReference>
<dbReference type="InterPro" id="IPR000297">
    <property type="entry name" value="PPIase_PpiC"/>
</dbReference>
<dbReference type="InterPro" id="IPR023058">
    <property type="entry name" value="PPIase_PpiC_CS"/>
</dbReference>
<dbReference type="InterPro" id="IPR001202">
    <property type="entry name" value="WW_dom"/>
</dbReference>
<dbReference type="InterPro" id="IPR036020">
    <property type="entry name" value="WW_dom_sf"/>
</dbReference>
<dbReference type="PANTHER" id="PTHR10657">
    <property type="entry name" value="PEPTIDYL-PROLYL CIS-TRANS ISOMERASE"/>
    <property type="match status" value="1"/>
</dbReference>
<dbReference type="PANTHER" id="PTHR10657:SF4">
    <property type="entry name" value="PEPTIDYL-PROLYL CIS-TRANS ISOMERASE-RELATED"/>
    <property type="match status" value="1"/>
</dbReference>
<dbReference type="Pfam" id="PF00639">
    <property type="entry name" value="Rotamase"/>
    <property type="match status" value="1"/>
</dbReference>
<dbReference type="Pfam" id="PF00397">
    <property type="entry name" value="WW"/>
    <property type="match status" value="1"/>
</dbReference>
<dbReference type="SMART" id="SM00456">
    <property type="entry name" value="WW"/>
    <property type="match status" value="1"/>
</dbReference>
<dbReference type="SUPFAM" id="SSF54534">
    <property type="entry name" value="FKBP-like"/>
    <property type="match status" value="1"/>
</dbReference>
<dbReference type="SUPFAM" id="SSF51045">
    <property type="entry name" value="WW domain"/>
    <property type="match status" value="1"/>
</dbReference>
<dbReference type="PROSITE" id="PS01096">
    <property type="entry name" value="PPIC_PPIASE_1"/>
    <property type="match status" value="1"/>
</dbReference>
<dbReference type="PROSITE" id="PS50198">
    <property type="entry name" value="PPIC_PPIASE_2"/>
    <property type="match status" value="1"/>
</dbReference>
<dbReference type="PROSITE" id="PS01159">
    <property type="entry name" value="WW_DOMAIN_1"/>
    <property type="match status" value="1"/>
</dbReference>
<dbReference type="PROSITE" id="PS50020">
    <property type="entry name" value="WW_DOMAIN_2"/>
    <property type="match status" value="1"/>
</dbReference>